<proteinExistence type="inferred from homology"/>
<feature type="chain" id="PRO_1000009917" description="Uracil-DNA glycosylase">
    <location>
        <begin position="1"/>
        <end position="227"/>
    </location>
</feature>
<feature type="active site" description="Proton acceptor" evidence="1">
    <location>
        <position position="68"/>
    </location>
</feature>
<protein>
    <recommendedName>
        <fullName evidence="1">Uracil-DNA glycosylase</fullName>
        <shortName evidence="1">UDG</shortName>
        <ecNumber evidence="1">3.2.2.27</ecNumber>
    </recommendedName>
</protein>
<gene>
    <name evidence="1" type="primary">ung</name>
    <name type="ordered locus">MRA_3005</name>
</gene>
<sequence>MTARPLSELVERGWAAALEPVADQVAHMGQFLRAEIAAGRRYLPAGSNVLRAFTFPFDNVRVLIVGQDPYPTPGHAVGLSFSVAPDVRPWPRSLANIFDEYTADLGYPLPSNGDLTPWAQRGVLLLNRVLTVRPSNPASHRGKGWEAVTECAIRALAARAAPLVAILWGRDASTLKPMLAAGNCVAIESPHPSPLSASRGFFGSRPFSRANELLVGMGAEPIDWRLP</sequence>
<reference key="1">
    <citation type="journal article" date="2008" name="PLoS ONE">
        <title>Genetic basis of virulence attenuation revealed by comparative genomic analysis of Mycobacterium tuberculosis strain H37Ra versus H37Rv.</title>
        <authorList>
            <person name="Zheng H."/>
            <person name="Lu L."/>
            <person name="Wang B."/>
            <person name="Pu S."/>
            <person name="Zhang X."/>
            <person name="Zhu G."/>
            <person name="Shi W."/>
            <person name="Zhang L."/>
            <person name="Wang H."/>
            <person name="Wang S."/>
            <person name="Zhao G."/>
            <person name="Zhang Y."/>
        </authorList>
    </citation>
    <scope>NUCLEOTIDE SEQUENCE [LARGE SCALE GENOMIC DNA]</scope>
    <source>
        <strain>ATCC 25177 / H37Ra</strain>
    </source>
</reference>
<evidence type="ECO:0000255" key="1">
    <source>
        <dbReference type="HAMAP-Rule" id="MF_00148"/>
    </source>
</evidence>
<keyword id="KW-0963">Cytoplasm</keyword>
<keyword id="KW-0227">DNA damage</keyword>
<keyword id="KW-0234">DNA repair</keyword>
<keyword id="KW-0378">Hydrolase</keyword>
<keyword id="KW-1185">Reference proteome</keyword>
<dbReference type="EC" id="3.2.2.27" evidence="1"/>
<dbReference type="EMBL" id="CP000611">
    <property type="protein sequence ID" value="ABQ74787.1"/>
    <property type="molecule type" value="Genomic_DNA"/>
</dbReference>
<dbReference type="RefSeq" id="WP_003899565.1">
    <property type="nucleotide sequence ID" value="NZ_CP016972.1"/>
</dbReference>
<dbReference type="SMR" id="A5U6Y7"/>
<dbReference type="KEGG" id="mra:MRA_3005"/>
<dbReference type="eggNOG" id="COG0692">
    <property type="taxonomic scope" value="Bacteria"/>
</dbReference>
<dbReference type="HOGENOM" id="CLU_032162_3_1_11"/>
<dbReference type="BRENDA" id="3.2.2.28">
    <property type="organism ID" value="3445"/>
</dbReference>
<dbReference type="Proteomes" id="UP000001988">
    <property type="component" value="Chromosome"/>
</dbReference>
<dbReference type="GO" id="GO:0005737">
    <property type="term" value="C:cytoplasm"/>
    <property type="evidence" value="ECO:0007669"/>
    <property type="project" value="UniProtKB-SubCell"/>
</dbReference>
<dbReference type="GO" id="GO:0004844">
    <property type="term" value="F:uracil DNA N-glycosylase activity"/>
    <property type="evidence" value="ECO:0007669"/>
    <property type="project" value="UniProtKB-UniRule"/>
</dbReference>
<dbReference type="GO" id="GO:0097510">
    <property type="term" value="P:base-excision repair, AP site formation via deaminated base removal"/>
    <property type="evidence" value="ECO:0007669"/>
    <property type="project" value="TreeGrafter"/>
</dbReference>
<dbReference type="CDD" id="cd10027">
    <property type="entry name" value="UDG-F1-like"/>
    <property type="match status" value="1"/>
</dbReference>
<dbReference type="FunFam" id="3.40.470.10:FF:000006">
    <property type="entry name" value="Uracil-DNA glycosylase"/>
    <property type="match status" value="1"/>
</dbReference>
<dbReference type="Gene3D" id="3.40.470.10">
    <property type="entry name" value="Uracil-DNA glycosylase-like domain"/>
    <property type="match status" value="1"/>
</dbReference>
<dbReference type="HAMAP" id="MF_00148">
    <property type="entry name" value="UDG"/>
    <property type="match status" value="1"/>
</dbReference>
<dbReference type="InterPro" id="IPR002043">
    <property type="entry name" value="UDG_fam1"/>
</dbReference>
<dbReference type="InterPro" id="IPR018085">
    <property type="entry name" value="Ura-DNA_Glyclase_AS"/>
</dbReference>
<dbReference type="InterPro" id="IPR005122">
    <property type="entry name" value="Uracil-DNA_glycosylase-like"/>
</dbReference>
<dbReference type="InterPro" id="IPR036895">
    <property type="entry name" value="Uracil-DNA_glycosylase-like_sf"/>
</dbReference>
<dbReference type="NCBIfam" id="NF003588">
    <property type="entry name" value="PRK05254.1-1"/>
    <property type="match status" value="1"/>
</dbReference>
<dbReference type="NCBIfam" id="NF003592">
    <property type="entry name" value="PRK05254.1-5"/>
    <property type="match status" value="1"/>
</dbReference>
<dbReference type="NCBIfam" id="TIGR00628">
    <property type="entry name" value="ung"/>
    <property type="match status" value="1"/>
</dbReference>
<dbReference type="PANTHER" id="PTHR11264">
    <property type="entry name" value="URACIL-DNA GLYCOSYLASE"/>
    <property type="match status" value="1"/>
</dbReference>
<dbReference type="PANTHER" id="PTHR11264:SF0">
    <property type="entry name" value="URACIL-DNA GLYCOSYLASE"/>
    <property type="match status" value="1"/>
</dbReference>
<dbReference type="Pfam" id="PF03167">
    <property type="entry name" value="UDG"/>
    <property type="match status" value="1"/>
</dbReference>
<dbReference type="SMART" id="SM00986">
    <property type="entry name" value="UDG"/>
    <property type="match status" value="1"/>
</dbReference>
<dbReference type="SMART" id="SM00987">
    <property type="entry name" value="UreE_C"/>
    <property type="match status" value="1"/>
</dbReference>
<dbReference type="SUPFAM" id="SSF52141">
    <property type="entry name" value="Uracil-DNA glycosylase-like"/>
    <property type="match status" value="1"/>
</dbReference>
<dbReference type="PROSITE" id="PS00130">
    <property type="entry name" value="U_DNA_GLYCOSYLASE"/>
    <property type="match status" value="1"/>
</dbReference>
<accession>A5U6Y7</accession>
<organism>
    <name type="scientific">Mycobacterium tuberculosis (strain ATCC 25177 / H37Ra)</name>
    <dbReference type="NCBI Taxonomy" id="419947"/>
    <lineage>
        <taxon>Bacteria</taxon>
        <taxon>Bacillati</taxon>
        <taxon>Actinomycetota</taxon>
        <taxon>Actinomycetes</taxon>
        <taxon>Mycobacteriales</taxon>
        <taxon>Mycobacteriaceae</taxon>
        <taxon>Mycobacterium</taxon>
        <taxon>Mycobacterium tuberculosis complex</taxon>
    </lineage>
</organism>
<comment type="function">
    <text evidence="1">Excises uracil residues from the DNA which can arise as a result of misincorporation of dUMP residues by DNA polymerase or due to deamination of cytosine.</text>
</comment>
<comment type="catalytic activity">
    <reaction evidence="1">
        <text>Hydrolyzes single-stranded DNA or mismatched double-stranded DNA and polynucleotides, releasing free uracil.</text>
        <dbReference type="EC" id="3.2.2.27"/>
    </reaction>
</comment>
<comment type="subcellular location">
    <subcellularLocation>
        <location evidence="1">Cytoplasm</location>
    </subcellularLocation>
</comment>
<comment type="similarity">
    <text evidence="1">Belongs to the uracil-DNA glycosylase (UDG) superfamily. UNG family.</text>
</comment>
<name>UNG_MYCTA</name>